<reference key="1">
    <citation type="journal article" date="2001" name="J. Neurosci.">
        <title>Caspase-activated DNase/DNA fragmentation factor 40 mediates apoptotic DNA fragmentation in transient cerebral ischemia and in neuronal cultures.</title>
        <authorList>
            <person name="Cao G."/>
            <person name="Pei W."/>
            <person name="Lan J."/>
            <person name="Stetler R.A."/>
            <person name="Luo Y."/>
            <person name="Nagayama T."/>
            <person name="Graham S.H."/>
            <person name="Yin X.M."/>
            <person name="Simon R.P."/>
            <person name="Chen J."/>
        </authorList>
    </citation>
    <scope>NUCLEOTIDE SEQUENCE [MRNA]</scope>
    <source>
        <tissue>Brain</tissue>
    </source>
</reference>
<dbReference type="EC" id="3.-.-.-"/>
<dbReference type="EMBL" id="AF136598">
    <property type="protein sequence ID" value="AAK16646.1"/>
    <property type="molecule type" value="mRNA"/>
</dbReference>
<dbReference type="RefSeq" id="NP_445814.1">
    <property type="nucleotide sequence ID" value="NM_053362.2"/>
</dbReference>
<dbReference type="SMR" id="Q99N34"/>
<dbReference type="BioGRID" id="249919">
    <property type="interactions" value="1"/>
</dbReference>
<dbReference type="FunCoup" id="Q99N34">
    <property type="interactions" value="458"/>
</dbReference>
<dbReference type="IntAct" id="Q99N34">
    <property type="interactions" value="1"/>
</dbReference>
<dbReference type="MINT" id="Q99N34"/>
<dbReference type="STRING" id="10116.ENSRNOP00000034722"/>
<dbReference type="iPTMnet" id="Q99N34"/>
<dbReference type="PhosphoSitePlus" id="Q99N34"/>
<dbReference type="PaxDb" id="10116-ENSRNOP00000034722"/>
<dbReference type="GeneID" id="84359"/>
<dbReference type="KEGG" id="rno:84359"/>
<dbReference type="UCSC" id="RGD:620335">
    <property type="organism name" value="rat"/>
</dbReference>
<dbReference type="AGR" id="RGD:620335"/>
<dbReference type="CTD" id="1677"/>
<dbReference type="RGD" id="620335">
    <property type="gene designation" value="Dffb"/>
</dbReference>
<dbReference type="eggNOG" id="ENOG502R0RF">
    <property type="taxonomic scope" value="Eukaryota"/>
</dbReference>
<dbReference type="HOGENOM" id="CLU_049235_1_1_1"/>
<dbReference type="InParanoid" id="Q99N34"/>
<dbReference type="PhylomeDB" id="Q99N34"/>
<dbReference type="TreeFam" id="TF102022"/>
<dbReference type="Reactome" id="R-RNO-140342">
    <property type="pathway name" value="Apoptosis induced DNA fragmentation"/>
</dbReference>
<dbReference type="PRO" id="PR:Q99N34"/>
<dbReference type="Proteomes" id="UP000002494">
    <property type="component" value="Unplaced"/>
</dbReference>
<dbReference type="GO" id="GO:0000785">
    <property type="term" value="C:chromatin"/>
    <property type="evidence" value="ECO:0000266"/>
    <property type="project" value="RGD"/>
</dbReference>
<dbReference type="GO" id="GO:0005829">
    <property type="term" value="C:cytosol"/>
    <property type="evidence" value="ECO:0000266"/>
    <property type="project" value="RGD"/>
</dbReference>
<dbReference type="GO" id="GO:0005634">
    <property type="term" value="C:nucleus"/>
    <property type="evidence" value="ECO:0000266"/>
    <property type="project" value="RGD"/>
</dbReference>
<dbReference type="GO" id="GO:0032991">
    <property type="term" value="C:protein-containing complex"/>
    <property type="evidence" value="ECO:0000266"/>
    <property type="project" value="RGD"/>
</dbReference>
<dbReference type="GO" id="GO:0097718">
    <property type="term" value="F:disordered domain specific binding"/>
    <property type="evidence" value="ECO:0000266"/>
    <property type="project" value="RGD"/>
</dbReference>
<dbReference type="GO" id="GO:0003677">
    <property type="term" value="F:DNA binding"/>
    <property type="evidence" value="ECO:0000266"/>
    <property type="project" value="RGD"/>
</dbReference>
<dbReference type="GO" id="GO:0004520">
    <property type="term" value="F:DNA endonuclease activity"/>
    <property type="evidence" value="ECO:0007669"/>
    <property type="project" value="InterPro"/>
</dbReference>
<dbReference type="GO" id="GO:0004536">
    <property type="term" value="F:DNA nuclease activity"/>
    <property type="evidence" value="ECO:0000314"/>
    <property type="project" value="RGD"/>
</dbReference>
<dbReference type="GO" id="GO:0019899">
    <property type="term" value="F:enzyme binding"/>
    <property type="evidence" value="ECO:0000266"/>
    <property type="project" value="RGD"/>
</dbReference>
<dbReference type="GO" id="GO:0042802">
    <property type="term" value="F:identical protein binding"/>
    <property type="evidence" value="ECO:0000266"/>
    <property type="project" value="RGD"/>
</dbReference>
<dbReference type="GO" id="GO:0004518">
    <property type="term" value="F:nuclease activity"/>
    <property type="evidence" value="ECO:0000266"/>
    <property type="project" value="RGD"/>
</dbReference>
<dbReference type="GO" id="GO:0019904">
    <property type="term" value="F:protein domain specific binding"/>
    <property type="evidence" value="ECO:0000266"/>
    <property type="project" value="RGD"/>
</dbReference>
<dbReference type="GO" id="GO:0030263">
    <property type="term" value="P:apoptotic chromosome condensation"/>
    <property type="evidence" value="ECO:0000266"/>
    <property type="project" value="RGD"/>
</dbReference>
<dbReference type="GO" id="GO:0006309">
    <property type="term" value="P:apoptotic DNA fragmentation"/>
    <property type="evidence" value="ECO:0000314"/>
    <property type="project" value="RGD"/>
</dbReference>
<dbReference type="GO" id="GO:0006308">
    <property type="term" value="P:DNA catabolic process"/>
    <property type="evidence" value="ECO:0000266"/>
    <property type="project" value="RGD"/>
</dbReference>
<dbReference type="GO" id="GO:1902511">
    <property type="term" value="P:negative regulation of apoptotic DNA fragmentation"/>
    <property type="evidence" value="ECO:0000266"/>
    <property type="project" value="RGD"/>
</dbReference>
<dbReference type="CDD" id="cd06535">
    <property type="entry name" value="CIDE_N_CAD"/>
    <property type="match status" value="1"/>
</dbReference>
<dbReference type="FunFam" id="3.10.20.10:FF:000006">
    <property type="entry name" value="DNA fragmentation factor subunit beta"/>
    <property type="match status" value="1"/>
</dbReference>
<dbReference type="Gene3D" id="3.10.20.10">
    <property type="match status" value="1"/>
</dbReference>
<dbReference type="Gene3D" id="6.10.140.170">
    <property type="match status" value="1"/>
</dbReference>
<dbReference type="InterPro" id="IPR003508">
    <property type="entry name" value="CIDE-N_dom"/>
</dbReference>
<dbReference type="InterPro" id="IPR039729">
    <property type="entry name" value="DFF40"/>
</dbReference>
<dbReference type="InterPro" id="IPR015311">
    <property type="entry name" value="DFF40_C"/>
</dbReference>
<dbReference type="InterPro" id="IPR044925">
    <property type="entry name" value="His-Me_finger_sf"/>
</dbReference>
<dbReference type="PANTHER" id="PTHR13067">
    <property type="entry name" value="CASPASE-ACTIVATED DNASE"/>
    <property type="match status" value="1"/>
</dbReference>
<dbReference type="PANTHER" id="PTHR13067:SF2">
    <property type="entry name" value="CASPASE-ACTIVATED DNASE"/>
    <property type="match status" value="1"/>
</dbReference>
<dbReference type="Pfam" id="PF02017">
    <property type="entry name" value="CIDE-N"/>
    <property type="match status" value="1"/>
</dbReference>
<dbReference type="Pfam" id="PF09230">
    <property type="entry name" value="DFF40"/>
    <property type="match status" value="1"/>
</dbReference>
<dbReference type="SMART" id="SM00266">
    <property type="entry name" value="CAD"/>
    <property type="match status" value="1"/>
</dbReference>
<dbReference type="SUPFAM" id="SSF54277">
    <property type="entry name" value="CAD &amp; PB1 domains"/>
    <property type="match status" value="1"/>
</dbReference>
<dbReference type="SUPFAM" id="SSF54060">
    <property type="entry name" value="His-Me finger endonucleases"/>
    <property type="match status" value="1"/>
</dbReference>
<dbReference type="PROSITE" id="PS51135">
    <property type="entry name" value="CIDE_N"/>
    <property type="match status" value="1"/>
</dbReference>
<accession>Q99N34</accession>
<feature type="chain" id="PRO_0000144715" description="DNA fragmentation factor subunit beta">
    <location>
        <begin position="1"/>
        <end position="349"/>
    </location>
</feature>
<feature type="domain" description="CIDE-N" evidence="3">
    <location>
        <begin position="7"/>
        <end position="83"/>
    </location>
</feature>
<feature type="region of interest" description="Disordered" evidence="4">
    <location>
        <begin position="319"/>
        <end position="349"/>
    </location>
</feature>
<feature type="compositionally biased region" description="Basic residues" evidence="4">
    <location>
        <begin position="329"/>
        <end position="349"/>
    </location>
</feature>
<evidence type="ECO:0000250" key="1"/>
<evidence type="ECO:0000250" key="2">
    <source>
        <dbReference type="UniProtKB" id="O76075"/>
    </source>
</evidence>
<evidence type="ECO:0000255" key="3">
    <source>
        <dbReference type="PROSITE-ProRule" id="PRU00447"/>
    </source>
</evidence>
<evidence type="ECO:0000256" key="4">
    <source>
        <dbReference type="SAM" id="MobiDB-lite"/>
    </source>
</evidence>
<organism>
    <name type="scientific">Rattus norvegicus</name>
    <name type="common">Rat</name>
    <dbReference type="NCBI Taxonomy" id="10116"/>
    <lineage>
        <taxon>Eukaryota</taxon>
        <taxon>Metazoa</taxon>
        <taxon>Chordata</taxon>
        <taxon>Craniata</taxon>
        <taxon>Vertebrata</taxon>
        <taxon>Euteleostomi</taxon>
        <taxon>Mammalia</taxon>
        <taxon>Eutheria</taxon>
        <taxon>Euarchontoglires</taxon>
        <taxon>Glires</taxon>
        <taxon>Rodentia</taxon>
        <taxon>Myomorpha</taxon>
        <taxon>Muroidea</taxon>
        <taxon>Muridae</taxon>
        <taxon>Murinae</taxon>
        <taxon>Rattus</taxon>
    </lineage>
</organism>
<gene>
    <name type="primary">Dffb</name>
    <name type="synonym">Cad</name>
</gene>
<protein>
    <recommendedName>
        <fullName>DNA fragmentation factor subunit beta</fullName>
        <ecNumber>3.-.-.-</ecNumber>
    </recommendedName>
    <alternativeName>
        <fullName>Caspase-activated deoxyribonuclease</fullName>
        <shortName>CAD</shortName>
        <shortName>Caspase-activated DNase</shortName>
    </alternativeName>
    <alternativeName>
        <fullName>DNA fragmentation factor 40 kDa subunit</fullName>
        <shortName>DFF-40</shortName>
    </alternativeName>
</protein>
<sequence length="349" mass="40097">MCAVLPQPKCVKLRALHSSCKFGVAARSCQELLRKGCIRFQLPVPGSRLCMYEDGTEVTDDCFPSLPNDSELLLLTAGETWHGYVSDITRLLSVFNEPHAGVIQAARQLLSDEQAPLRQKLLADLLHHVSQNITAETREQDPSWFEGLESRFRNKSGYLRYSCESRIRGYLREVSAYISMVDAAAREEYLRVLSSMCHKLKSVQYNGSYFDRGAEASSRLCTPEGWFSCQGPFDLESCLSKHSINPYGNRESRILFSTWNLDHIIEKKRTVVPTLAEAIQDGREVNWEYFYSLLFTAENLKLVHIACHKKTTHKLQCDRSRIYRPQTGSRRKQPPRKQPPRKRPPRKRQ</sequence>
<proteinExistence type="evidence at protein level"/>
<comment type="function">
    <text>Nuclease that induces DNA fragmentation and chromatin condensation during apoptosis. Degrades naked DNA and induces apoptotic morphology.</text>
</comment>
<comment type="activity regulation">
    <text>Inhibited by DFFA (DFF45).</text>
</comment>
<comment type="subunit">
    <text evidence="2">Heterodimer of DFFA and DFFB (By similarity). Interacts with H1-1 (By similarity).</text>
</comment>
<comment type="interaction">
    <interactant intactId="EBI-8498730">
        <id>Q99N34</id>
    </interactant>
    <interactant intactId="EBI-8498561">
        <id>Q63369</id>
        <label>Nfkb1</label>
    </interactant>
    <organismsDiffer>false</organismsDiffer>
    <experiments>2</experiments>
</comment>
<comment type="subcellular location">
    <subcellularLocation>
        <location evidence="1">Cytoplasm</location>
    </subcellularLocation>
    <subcellularLocation>
        <location evidence="1">Nucleus</location>
    </subcellularLocation>
</comment>
<name>DFFB_RAT</name>
<keyword id="KW-0053">Apoptosis</keyword>
<keyword id="KW-0963">Cytoplasm</keyword>
<keyword id="KW-0378">Hydrolase</keyword>
<keyword id="KW-0540">Nuclease</keyword>
<keyword id="KW-0539">Nucleus</keyword>
<keyword id="KW-1185">Reference proteome</keyword>